<reference key="1">
    <citation type="journal article" date="2004" name="Environ. Microbiol.">
        <title>The genome of Desulfotalea psychrophila, a sulfate-reducing bacterium from permanently cold Arctic sediments.</title>
        <authorList>
            <person name="Rabus R."/>
            <person name="Ruepp A."/>
            <person name="Frickey T."/>
            <person name="Rattei T."/>
            <person name="Fartmann B."/>
            <person name="Stark M."/>
            <person name="Bauer M."/>
            <person name="Zibat A."/>
            <person name="Lombardot T."/>
            <person name="Becker I."/>
            <person name="Amann J."/>
            <person name="Gellner K."/>
            <person name="Teeling H."/>
            <person name="Leuschner W.D."/>
            <person name="Gloeckner F.-O."/>
            <person name="Lupas A.N."/>
            <person name="Amann R."/>
            <person name="Klenk H.-P."/>
        </authorList>
    </citation>
    <scope>NUCLEOTIDE SEQUENCE [LARGE SCALE GENOMIC DNA]</scope>
    <source>
        <strain>DSM 12343 / LSv54</strain>
    </source>
</reference>
<organism>
    <name type="scientific">Desulfotalea psychrophila (strain LSv54 / DSM 12343)</name>
    <dbReference type="NCBI Taxonomy" id="177439"/>
    <lineage>
        <taxon>Bacteria</taxon>
        <taxon>Pseudomonadati</taxon>
        <taxon>Thermodesulfobacteriota</taxon>
        <taxon>Desulfobulbia</taxon>
        <taxon>Desulfobulbales</taxon>
        <taxon>Desulfocapsaceae</taxon>
        <taxon>Desulfotalea</taxon>
    </lineage>
</organism>
<protein>
    <recommendedName>
        <fullName evidence="1">3-methyl-2-oxobutanoate hydroxymethyltransferase</fullName>
        <ecNumber evidence="1">2.1.2.11</ecNumber>
    </recommendedName>
    <alternativeName>
        <fullName evidence="1">Ketopantoate hydroxymethyltransferase</fullName>
        <shortName evidence="1">KPHMT</shortName>
    </alternativeName>
</protein>
<accession>Q6AJ44</accession>
<sequence>MRKTVVDIIAMKAAGQKISMLTAYDASMSALLDQAGIDILLVGDSLGMTVLGYDSTVPVTMADMVHHMAAVRRGAPDAFVVGDMPFGSYQTGARDAVLNAMRLLKEGGCDVVKLEGGEVVCPVVKAIVDAGIPVMGHLGLTPQTAAVLGGYKVQGRDMEAARKLFADAKRLEEAGVCGLVLECIPAGLAEVVTASIAVPTVGIGAGKGCDGQVLVINDMLGLFEKFTPKFVKHYAQLAPLVRQGVENYIGEVRAGAFPEAEHTFTSSCDYKVLLSGDDQ</sequence>
<dbReference type="EC" id="2.1.2.11" evidence="1"/>
<dbReference type="EMBL" id="CR522870">
    <property type="protein sequence ID" value="CAG37636.1"/>
    <property type="status" value="ALT_INIT"/>
    <property type="molecule type" value="Genomic_DNA"/>
</dbReference>
<dbReference type="RefSeq" id="WP_041278079.1">
    <property type="nucleotide sequence ID" value="NC_006138.1"/>
</dbReference>
<dbReference type="SMR" id="Q6AJ44"/>
<dbReference type="STRING" id="177439.DP2907"/>
<dbReference type="KEGG" id="dps:DP2907"/>
<dbReference type="eggNOG" id="COG0413">
    <property type="taxonomic scope" value="Bacteria"/>
</dbReference>
<dbReference type="HOGENOM" id="CLU_036645_1_0_7"/>
<dbReference type="OrthoDB" id="9781789at2"/>
<dbReference type="UniPathway" id="UPA00028">
    <property type="reaction ID" value="UER00003"/>
</dbReference>
<dbReference type="Proteomes" id="UP000000602">
    <property type="component" value="Chromosome"/>
</dbReference>
<dbReference type="GO" id="GO:0005737">
    <property type="term" value="C:cytoplasm"/>
    <property type="evidence" value="ECO:0007669"/>
    <property type="project" value="UniProtKB-SubCell"/>
</dbReference>
<dbReference type="GO" id="GO:0003864">
    <property type="term" value="F:3-methyl-2-oxobutanoate hydroxymethyltransferase activity"/>
    <property type="evidence" value="ECO:0007669"/>
    <property type="project" value="UniProtKB-UniRule"/>
</dbReference>
<dbReference type="GO" id="GO:0000287">
    <property type="term" value="F:magnesium ion binding"/>
    <property type="evidence" value="ECO:0007669"/>
    <property type="project" value="TreeGrafter"/>
</dbReference>
<dbReference type="GO" id="GO:0015940">
    <property type="term" value="P:pantothenate biosynthetic process"/>
    <property type="evidence" value="ECO:0007669"/>
    <property type="project" value="UniProtKB-UniRule"/>
</dbReference>
<dbReference type="CDD" id="cd06557">
    <property type="entry name" value="KPHMT-like"/>
    <property type="match status" value="1"/>
</dbReference>
<dbReference type="FunFam" id="3.20.20.60:FF:000003">
    <property type="entry name" value="3-methyl-2-oxobutanoate hydroxymethyltransferase"/>
    <property type="match status" value="1"/>
</dbReference>
<dbReference type="Gene3D" id="3.20.20.60">
    <property type="entry name" value="Phosphoenolpyruvate-binding domains"/>
    <property type="match status" value="1"/>
</dbReference>
<dbReference type="HAMAP" id="MF_00156">
    <property type="entry name" value="PanB"/>
    <property type="match status" value="1"/>
</dbReference>
<dbReference type="InterPro" id="IPR003700">
    <property type="entry name" value="Pantoate_hydroxy_MeTrfase"/>
</dbReference>
<dbReference type="InterPro" id="IPR015813">
    <property type="entry name" value="Pyrv/PenolPyrv_kinase-like_dom"/>
</dbReference>
<dbReference type="InterPro" id="IPR040442">
    <property type="entry name" value="Pyrv_kinase-like_dom_sf"/>
</dbReference>
<dbReference type="NCBIfam" id="TIGR00222">
    <property type="entry name" value="panB"/>
    <property type="match status" value="1"/>
</dbReference>
<dbReference type="NCBIfam" id="NF001452">
    <property type="entry name" value="PRK00311.1"/>
    <property type="match status" value="1"/>
</dbReference>
<dbReference type="PANTHER" id="PTHR20881">
    <property type="entry name" value="3-METHYL-2-OXOBUTANOATE HYDROXYMETHYLTRANSFERASE"/>
    <property type="match status" value="1"/>
</dbReference>
<dbReference type="PANTHER" id="PTHR20881:SF0">
    <property type="entry name" value="3-METHYL-2-OXOBUTANOATE HYDROXYMETHYLTRANSFERASE"/>
    <property type="match status" value="1"/>
</dbReference>
<dbReference type="Pfam" id="PF02548">
    <property type="entry name" value="Pantoate_transf"/>
    <property type="match status" value="1"/>
</dbReference>
<dbReference type="PIRSF" id="PIRSF000388">
    <property type="entry name" value="Pantoate_hydroxy_MeTrfase"/>
    <property type="match status" value="1"/>
</dbReference>
<dbReference type="SUPFAM" id="SSF51621">
    <property type="entry name" value="Phosphoenolpyruvate/pyruvate domain"/>
    <property type="match status" value="1"/>
</dbReference>
<name>PANB_DESPS</name>
<proteinExistence type="inferred from homology"/>
<evidence type="ECO:0000255" key="1">
    <source>
        <dbReference type="HAMAP-Rule" id="MF_00156"/>
    </source>
</evidence>
<evidence type="ECO:0000305" key="2"/>
<keyword id="KW-0963">Cytoplasm</keyword>
<keyword id="KW-0460">Magnesium</keyword>
<keyword id="KW-0479">Metal-binding</keyword>
<keyword id="KW-0566">Pantothenate biosynthesis</keyword>
<keyword id="KW-1185">Reference proteome</keyword>
<keyword id="KW-0808">Transferase</keyword>
<feature type="chain" id="PRO_0000184840" description="3-methyl-2-oxobutanoate hydroxymethyltransferase">
    <location>
        <begin position="1"/>
        <end position="279"/>
    </location>
</feature>
<feature type="active site" description="Proton acceptor" evidence="1">
    <location>
        <position position="182"/>
    </location>
</feature>
<feature type="binding site" evidence="1">
    <location>
        <begin position="44"/>
        <end position="45"/>
    </location>
    <ligand>
        <name>3-methyl-2-oxobutanoate</name>
        <dbReference type="ChEBI" id="CHEBI:11851"/>
    </ligand>
</feature>
<feature type="binding site" evidence="1">
    <location>
        <position position="44"/>
    </location>
    <ligand>
        <name>Mg(2+)</name>
        <dbReference type="ChEBI" id="CHEBI:18420"/>
    </ligand>
</feature>
<feature type="binding site" evidence="1">
    <location>
        <position position="83"/>
    </location>
    <ligand>
        <name>3-methyl-2-oxobutanoate</name>
        <dbReference type="ChEBI" id="CHEBI:11851"/>
    </ligand>
</feature>
<feature type="binding site" evidence="1">
    <location>
        <position position="83"/>
    </location>
    <ligand>
        <name>Mg(2+)</name>
        <dbReference type="ChEBI" id="CHEBI:18420"/>
    </ligand>
</feature>
<feature type="binding site" evidence="1">
    <location>
        <position position="113"/>
    </location>
    <ligand>
        <name>3-methyl-2-oxobutanoate</name>
        <dbReference type="ChEBI" id="CHEBI:11851"/>
    </ligand>
</feature>
<feature type="binding site" evidence="1">
    <location>
        <position position="115"/>
    </location>
    <ligand>
        <name>Mg(2+)</name>
        <dbReference type="ChEBI" id="CHEBI:18420"/>
    </ligand>
</feature>
<gene>
    <name evidence="1" type="primary">panB</name>
    <name type="ordered locus">DP2907</name>
</gene>
<comment type="function">
    <text evidence="1">Catalyzes the reversible reaction in which hydroxymethyl group from 5,10-methylenetetrahydrofolate is transferred onto alpha-ketoisovalerate to form ketopantoate.</text>
</comment>
<comment type="catalytic activity">
    <reaction evidence="1">
        <text>3-methyl-2-oxobutanoate + (6R)-5,10-methylene-5,6,7,8-tetrahydrofolate + H2O = 2-dehydropantoate + (6S)-5,6,7,8-tetrahydrofolate</text>
        <dbReference type="Rhea" id="RHEA:11824"/>
        <dbReference type="ChEBI" id="CHEBI:11561"/>
        <dbReference type="ChEBI" id="CHEBI:11851"/>
        <dbReference type="ChEBI" id="CHEBI:15377"/>
        <dbReference type="ChEBI" id="CHEBI:15636"/>
        <dbReference type="ChEBI" id="CHEBI:57453"/>
        <dbReference type="EC" id="2.1.2.11"/>
    </reaction>
</comment>
<comment type="cofactor">
    <cofactor evidence="1">
        <name>Mg(2+)</name>
        <dbReference type="ChEBI" id="CHEBI:18420"/>
    </cofactor>
    <text evidence="1">Binds 1 Mg(2+) ion per subunit.</text>
</comment>
<comment type="pathway">
    <text evidence="1">Cofactor biosynthesis; (R)-pantothenate biosynthesis; (R)-pantoate from 3-methyl-2-oxobutanoate: step 1/2.</text>
</comment>
<comment type="subunit">
    <text evidence="1">Homodecamer; pentamer of dimers.</text>
</comment>
<comment type="subcellular location">
    <subcellularLocation>
        <location evidence="1">Cytoplasm</location>
    </subcellularLocation>
</comment>
<comment type="similarity">
    <text evidence="1">Belongs to the PanB family.</text>
</comment>
<comment type="sequence caution" evidence="2">
    <conflict type="erroneous initiation">
        <sequence resource="EMBL-CDS" id="CAG37636"/>
    </conflict>
</comment>